<reference key="1">
    <citation type="journal article" date="2008" name="Genome Res.">
        <title>Insights from the complete genome sequence of Mycobacterium marinum on the evolution of Mycobacterium tuberculosis.</title>
        <authorList>
            <person name="Stinear T.P."/>
            <person name="Seemann T."/>
            <person name="Harrison P.F."/>
            <person name="Jenkin G.A."/>
            <person name="Davies J.K."/>
            <person name="Johnson P.D."/>
            <person name="Abdellah Z."/>
            <person name="Arrowsmith C."/>
            <person name="Chillingworth T."/>
            <person name="Churcher C."/>
            <person name="Clarke K."/>
            <person name="Cronin A."/>
            <person name="Davis P."/>
            <person name="Goodhead I."/>
            <person name="Holroyd N."/>
            <person name="Jagels K."/>
            <person name="Lord A."/>
            <person name="Moule S."/>
            <person name="Mungall K."/>
            <person name="Norbertczak H."/>
            <person name="Quail M.A."/>
            <person name="Rabbinowitsch E."/>
            <person name="Walker D."/>
            <person name="White B."/>
            <person name="Whitehead S."/>
            <person name="Small P.L."/>
            <person name="Brosch R."/>
            <person name="Ramakrishnan L."/>
            <person name="Fischbach M.A."/>
            <person name="Parkhill J."/>
            <person name="Cole S.T."/>
        </authorList>
    </citation>
    <scope>NUCLEOTIDE SEQUENCE [LARGE SCALE GENOMIC DNA]</scope>
    <source>
        <strain>ATCC BAA-535 / M</strain>
    </source>
</reference>
<feature type="chain" id="PRO_0000377227" description="tRNA dimethylallyltransferase 1">
    <location>
        <begin position="1"/>
        <end position="314"/>
    </location>
</feature>
<feature type="binding site" evidence="1">
    <location>
        <begin position="8"/>
        <end position="15"/>
    </location>
    <ligand>
        <name>ATP</name>
        <dbReference type="ChEBI" id="CHEBI:30616"/>
    </ligand>
</feature>
<feature type="binding site" evidence="1">
    <location>
        <begin position="10"/>
        <end position="15"/>
    </location>
    <ligand>
        <name>substrate</name>
    </ligand>
</feature>
<feature type="site" description="Interaction with substrate tRNA" evidence="1">
    <location>
        <position position="103"/>
    </location>
</feature>
<feature type="site" description="Interaction with substrate tRNA" evidence="1">
    <location>
        <position position="124"/>
    </location>
</feature>
<sequence>MRPLTIIGPTGTGKSDLAIEIADRLSGKIAVEIVNADAYQLYRGMDIGTGKVPLAQRRGIPHHQLDVLDVTETATVAGYQRSAAADIEAIASRGALPLLVGGSMLYVQSLLDDWAFPAKDPAIRARWERRLAQVGPARLHAELVRRDPAAAAVIPLNDARRTVRALEVVEITGRPYAASAPRIGSPRWDSAIIGLDCETKVLDERLAARTKAMFDRGLIEEVISLLPCGLARGVTASRALGYAQVMEALKAGADTQALDSARQQTCLATRRYVRRQRSWFRRDRRVRWLDATVSTAAHRTAIIEAVLGAWRRAS</sequence>
<gene>
    <name evidence="1" type="primary">miaA1</name>
    <name type="ordered locus">MMAR_1561</name>
</gene>
<name>MIAA1_MYCMM</name>
<keyword id="KW-0067">ATP-binding</keyword>
<keyword id="KW-0460">Magnesium</keyword>
<keyword id="KW-0547">Nucleotide-binding</keyword>
<keyword id="KW-1185">Reference proteome</keyword>
<keyword id="KW-0808">Transferase</keyword>
<keyword id="KW-0819">tRNA processing</keyword>
<evidence type="ECO:0000255" key="1">
    <source>
        <dbReference type="HAMAP-Rule" id="MF_00185"/>
    </source>
</evidence>
<proteinExistence type="inferred from homology"/>
<comment type="function">
    <text evidence="1">Catalyzes the transfer of a dimethylallyl group onto the adenine at position 37 in tRNAs that read codons beginning with uridine, leading to the formation of N6-(dimethylallyl)adenosine (i(6)A).</text>
</comment>
<comment type="catalytic activity">
    <reaction evidence="1">
        <text>adenosine(37) in tRNA + dimethylallyl diphosphate = N(6)-dimethylallyladenosine(37) in tRNA + diphosphate</text>
        <dbReference type="Rhea" id="RHEA:26482"/>
        <dbReference type="Rhea" id="RHEA-COMP:10162"/>
        <dbReference type="Rhea" id="RHEA-COMP:10375"/>
        <dbReference type="ChEBI" id="CHEBI:33019"/>
        <dbReference type="ChEBI" id="CHEBI:57623"/>
        <dbReference type="ChEBI" id="CHEBI:74411"/>
        <dbReference type="ChEBI" id="CHEBI:74415"/>
        <dbReference type="EC" id="2.5.1.75"/>
    </reaction>
</comment>
<comment type="cofactor">
    <cofactor evidence="1">
        <name>Mg(2+)</name>
        <dbReference type="ChEBI" id="CHEBI:18420"/>
    </cofactor>
</comment>
<comment type="subunit">
    <text evidence="1">Monomer.</text>
</comment>
<comment type="similarity">
    <text evidence="1">Belongs to the IPP transferase family.</text>
</comment>
<dbReference type="EC" id="2.5.1.75" evidence="1"/>
<dbReference type="EMBL" id="CP000854">
    <property type="protein sequence ID" value="ACC40013.1"/>
    <property type="molecule type" value="Genomic_DNA"/>
</dbReference>
<dbReference type="RefSeq" id="WP_012393397.1">
    <property type="nucleotide sequence ID" value="NC_010612.1"/>
</dbReference>
<dbReference type="SMR" id="B2HGM7"/>
<dbReference type="STRING" id="216594.MMAR_1561"/>
<dbReference type="KEGG" id="mmi:MMAR_1561"/>
<dbReference type="eggNOG" id="COG0324">
    <property type="taxonomic scope" value="Bacteria"/>
</dbReference>
<dbReference type="HOGENOM" id="CLU_032616_0_1_11"/>
<dbReference type="OrthoDB" id="9776390at2"/>
<dbReference type="Proteomes" id="UP000001190">
    <property type="component" value="Chromosome"/>
</dbReference>
<dbReference type="GO" id="GO:0005524">
    <property type="term" value="F:ATP binding"/>
    <property type="evidence" value="ECO:0007669"/>
    <property type="project" value="UniProtKB-UniRule"/>
</dbReference>
<dbReference type="GO" id="GO:0052381">
    <property type="term" value="F:tRNA dimethylallyltransferase activity"/>
    <property type="evidence" value="ECO:0007669"/>
    <property type="project" value="UniProtKB-UniRule"/>
</dbReference>
<dbReference type="GO" id="GO:0006400">
    <property type="term" value="P:tRNA modification"/>
    <property type="evidence" value="ECO:0007669"/>
    <property type="project" value="TreeGrafter"/>
</dbReference>
<dbReference type="FunFam" id="1.10.20.140:FF:000001">
    <property type="entry name" value="tRNA dimethylallyltransferase"/>
    <property type="match status" value="1"/>
</dbReference>
<dbReference type="Gene3D" id="1.10.20.140">
    <property type="match status" value="1"/>
</dbReference>
<dbReference type="Gene3D" id="3.40.50.300">
    <property type="entry name" value="P-loop containing nucleotide triphosphate hydrolases"/>
    <property type="match status" value="1"/>
</dbReference>
<dbReference type="HAMAP" id="MF_00185">
    <property type="entry name" value="IPP_trans"/>
    <property type="match status" value="1"/>
</dbReference>
<dbReference type="InterPro" id="IPR039657">
    <property type="entry name" value="Dimethylallyltransferase"/>
</dbReference>
<dbReference type="InterPro" id="IPR018022">
    <property type="entry name" value="IPT"/>
</dbReference>
<dbReference type="InterPro" id="IPR027417">
    <property type="entry name" value="P-loop_NTPase"/>
</dbReference>
<dbReference type="NCBIfam" id="TIGR00174">
    <property type="entry name" value="miaA"/>
    <property type="match status" value="1"/>
</dbReference>
<dbReference type="PANTHER" id="PTHR11088">
    <property type="entry name" value="TRNA DIMETHYLALLYLTRANSFERASE"/>
    <property type="match status" value="1"/>
</dbReference>
<dbReference type="PANTHER" id="PTHR11088:SF60">
    <property type="entry name" value="TRNA DIMETHYLALLYLTRANSFERASE"/>
    <property type="match status" value="1"/>
</dbReference>
<dbReference type="Pfam" id="PF01715">
    <property type="entry name" value="IPPT"/>
    <property type="match status" value="1"/>
</dbReference>
<dbReference type="SUPFAM" id="SSF52540">
    <property type="entry name" value="P-loop containing nucleoside triphosphate hydrolases"/>
    <property type="match status" value="1"/>
</dbReference>
<organism>
    <name type="scientific">Mycobacterium marinum (strain ATCC BAA-535 / M)</name>
    <dbReference type="NCBI Taxonomy" id="216594"/>
    <lineage>
        <taxon>Bacteria</taxon>
        <taxon>Bacillati</taxon>
        <taxon>Actinomycetota</taxon>
        <taxon>Actinomycetes</taxon>
        <taxon>Mycobacteriales</taxon>
        <taxon>Mycobacteriaceae</taxon>
        <taxon>Mycobacterium</taxon>
        <taxon>Mycobacterium ulcerans group</taxon>
    </lineage>
</organism>
<accession>B2HGM7</accession>
<protein>
    <recommendedName>
        <fullName evidence="1">tRNA dimethylallyltransferase 1</fullName>
        <ecNumber evidence="1">2.5.1.75</ecNumber>
    </recommendedName>
    <alternativeName>
        <fullName evidence="1">Dimethylallyl diphosphate:tRNA dimethylallyltransferase 1</fullName>
        <shortName evidence="1">DMAPP:tRNA dimethylallyltransferase 1</shortName>
        <shortName evidence="1">DMATase 1</shortName>
    </alternativeName>
    <alternativeName>
        <fullName evidence="1">Isopentenyl-diphosphate:tRNA isopentenyltransferase 1</fullName>
        <shortName evidence="1">IPP transferase 1</shortName>
        <shortName evidence="1">IPPT 1</shortName>
        <shortName evidence="1">IPTase 1</shortName>
    </alternativeName>
</protein>